<name>DGTL1_LEPBL</name>
<comment type="similarity">
    <text evidence="1">Belongs to the dGTPase family. Type 2 subfamily.</text>
</comment>
<dbReference type="EMBL" id="CP000348">
    <property type="protein sequence ID" value="ABJ79025.1"/>
    <property type="molecule type" value="Genomic_DNA"/>
</dbReference>
<dbReference type="RefSeq" id="WP_011670201.1">
    <property type="nucleotide sequence ID" value="NC_008508.1"/>
</dbReference>
<dbReference type="SMR" id="Q051H0"/>
<dbReference type="KEGG" id="lbl:LBL_1562"/>
<dbReference type="HOGENOM" id="CLU_028163_1_0_12"/>
<dbReference type="GO" id="GO:0016793">
    <property type="term" value="F:triphosphoric monoester hydrolase activity"/>
    <property type="evidence" value="ECO:0007669"/>
    <property type="project" value="InterPro"/>
</dbReference>
<dbReference type="CDD" id="cd00077">
    <property type="entry name" value="HDc"/>
    <property type="match status" value="1"/>
</dbReference>
<dbReference type="FunFam" id="1.10.3210.10:FF:000024">
    <property type="entry name" value="Deoxyguanosinetriphosphate triphosphohydrolase-like protein"/>
    <property type="match status" value="1"/>
</dbReference>
<dbReference type="Gene3D" id="1.10.3210.10">
    <property type="entry name" value="Hypothetical protein af1432"/>
    <property type="match status" value="1"/>
</dbReference>
<dbReference type="HAMAP" id="MF_01212">
    <property type="entry name" value="dGTPase_type2"/>
    <property type="match status" value="1"/>
</dbReference>
<dbReference type="InterPro" id="IPR006261">
    <property type="entry name" value="dGTPase"/>
</dbReference>
<dbReference type="InterPro" id="IPR051094">
    <property type="entry name" value="Diverse_Catalytic_Enzymes"/>
</dbReference>
<dbReference type="InterPro" id="IPR023023">
    <property type="entry name" value="dNTPase_2"/>
</dbReference>
<dbReference type="InterPro" id="IPR003607">
    <property type="entry name" value="HD/PDEase_dom"/>
</dbReference>
<dbReference type="InterPro" id="IPR006674">
    <property type="entry name" value="HD_domain"/>
</dbReference>
<dbReference type="InterPro" id="IPR026875">
    <property type="entry name" value="PHydrolase_assoc_dom"/>
</dbReference>
<dbReference type="NCBIfam" id="TIGR01353">
    <property type="entry name" value="dGTP_triPase"/>
    <property type="match status" value="1"/>
</dbReference>
<dbReference type="NCBIfam" id="NF002326">
    <property type="entry name" value="PRK01286.1-1"/>
    <property type="match status" value="1"/>
</dbReference>
<dbReference type="PANTHER" id="PTHR35795:SF1">
    <property type="entry name" value="BIS(5'-NUCLEOSYL)-TETRAPHOSPHATASE, SYMMETRICAL"/>
    <property type="match status" value="1"/>
</dbReference>
<dbReference type="PANTHER" id="PTHR35795">
    <property type="entry name" value="SLR1885 PROTEIN"/>
    <property type="match status" value="1"/>
</dbReference>
<dbReference type="Pfam" id="PF01966">
    <property type="entry name" value="HD"/>
    <property type="match status" value="1"/>
</dbReference>
<dbReference type="Pfam" id="PF13286">
    <property type="entry name" value="HD_assoc"/>
    <property type="match status" value="1"/>
</dbReference>
<dbReference type="SMART" id="SM00471">
    <property type="entry name" value="HDc"/>
    <property type="match status" value="1"/>
</dbReference>
<dbReference type="SUPFAM" id="SSF109604">
    <property type="entry name" value="HD-domain/PDEase-like"/>
    <property type="match status" value="1"/>
</dbReference>
<dbReference type="PROSITE" id="PS51831">
    <property type="entry name" value="HD"/>
    <property type="match status" value="1"/>
</dbReference>
<sequence>MYFSRNDLIQKEIAGLAPYAISSTNNGGRFYEEEEHSYRLPFQRDRDRVLHSSAFKRLQYKTQVFIFSVGENYRNRMTHTLEVAGLSRTIASALGLNSHLSESIALAHDLGHTPFGHAGQEILSSLMKDHGGFEHNKQSLRIVTSIEKKYPNFPGLNLCRETLKGLMKHGTEYDPSMMLLERKESGPSLEGMIADLSDEIAYTSHDIEDGWEMGYLHLGDLSENPFWKEVYEECKEQYKDVGEKILVRTAIRTLTNSMVSDLIQNISLQLETNQVKSTEDLIRLWKQGIRIASFSERVDSKFRELKFFLYEKLYRHEDLVRMSDYGKKVIESLFDYFLKHPEKIPDTYKERIEEESLYRVISDYVAGMTDRYAEKIYQSLH</sequence>
<keyword id="KW-0378">Hydrolase</keyword>
<accession>Q051H0</accession>
<organism>
    <name type="scientific">Leptospira borgpetersenii serovar Hardjo-bovis (strain L550)</name>
    <dbReference type="NCBI Taxonomy" id="355276"/>
    <lineage>
        <taxon>Bacteria</taxon>
        <taxon>Pseudomonadati</taxon>
        <taxon>Spirochaetota</taxon>
        <taxon>Spirochaetia</taxon>
        <taxon>Leptospirales</taxon>
        <taxon>Leptospiraceae</taxon>
        <taxon>Leptospira</taxon>
    </lineage>
</organism>
<reference key="1">
    <citation type="journal article" date="2006" name="Proc. Natl. Acad. Sci. U.S.A.">
        <title>Genome reduction in Leptospira borgpetersenii reflects limited transmission potential.</title>
        <authorList>
            <person name="Bulach D.M."/>
            <person name="Zuerner R.L."/>
            <person name="Wilson P."/>
            <person name="Seemann T."/>
            <person name="McGrath A."/>
            <person name="Cullen P.A."/>
            <person name="Davis J."/>
            <person name="Johnson M."/>
            <person name="Kuczek E."/>
            <person name="Alt D.P."/>
            <person name="Peterson-Burch B."/>
            <person name="Coppel R.L."/>
            <person name="Rood J.I."/>
            <person name="Davies J.K."/>
            <person name="Adler B."/>
        </authorList>
    </citation>
    <scope>NUCLEOTIDE SEQUENCE [LARGE SCALE GENOMIC DNA]</scope>
    <source>
        <strain>L550</strain>
    </source>
</reference>
<evidence type="ECO:0000255" key="1">
    <source>
        <dbReference type="HAMAP-Rule" id="MF_01212"/>
    </source>
</evidence>
<evidence type="ECO:0000255" key="2">
    <source>
        <dbReference type="PROSITE-ProRule" id="PRU01175"/>
    </source>
</evidence>
<feature type="chain" id="PRO_1000066419" description="Deoxyguanosinetriphosphate triphosphohydrolase-like protein">
    <location>
        <begin position="1"/>
        <end position="381"/>
    </location>
</feature>
<feature type="domain" description="HD" evidence="2">
    <location>
        <begin position="76"/>
        <end position="203"/>
    </location>
</feature>
<gene>
    <name type="ordered locus">LBL_1562</name>
</gene>
<proteinExistence type="inferred from homology"/>
<protein>
    <recommendedName>
        <fullName evidence="1">Deoxyguanosinetriphosphate triphosphohydrolase-like protein</fullName>
    </recommendedName>
</protein>